<proteinExistence type="inferred from homology"/>
<accession>Q7VA75</accession>
<gene>
    <name evidence="1" type="primary">atpC</name>
    <name type="ordered locus">Pro_1592</name>
</gene>
<keyword id="KW-0066">ATP synthesis</keyword>
<keyword id="KW-0139">CF(1)</keyword>
<keyword id="KW-0375">Hydrogen ion transport</keyword>
<keyword id="KW-0406">Ion transport</keyword>
<keyword id="KW-0472">Membrane</keyword>
<keyword id="KW-1185">Reference proteome</keyword>
<keyword id="KW-0793">Thylakoid</keyword>
<keyword id="KW-0813">Transport</keyword>
<evidence type="ECO:0000255" key="1">
    <source>
        <dbReference type="HAMAP-Rule" id="MF_00530"/>
    </source>
</evidence>
<evidence type="ECO:0000256" key="2">
    <source>
        <dbReference type="SAM" id="MobiDB-lite"/>
    </source>
</evidence>
<name>ATPE_PROMA</name>
<comment type="function">
    <text evidence="1">Produces ATP from ADP in the presence of a proton gradient across the membrane.</text>
</comment>
<comment type="subunit">
    <text>F-type ATPases have 2 components, CF(1) - the catalytic core - and CF(0) - the membrane proton channel. CF(1) has five subunits: alpha(3), beta(3), gamma(1), delta(1), epsilon(1). CF(0) has three main subunits: a, b and c.</text>
</comment>
<comment type="subcellular location">
    <subcellularLocation>
        <location evidence="1">Cellular thylakoid membrane</location>
        <topology evidence="1">Peripheral membrane protein</topology>
    </subcellularLocation>
</comment>
<comment type="similarity">
    <text evidence="1">Belongs to the ATPase epsilon chain family.</text>
</comment>
<protein>
    <recommendedName>
        <fullName evidence="1">ATP synthase epsilon chain</fullName>
    </recommendedName>
    <alternativeName>
        <fullName evidence="1">ATP synthase F1 sector epsilon subunit</fullName>
    </alternativeName>
    <alternativeName>
        <fullName evidence="1">F-ATPase epsilon subunit</fullName>
    </alternativeName>
</protein>
<feature type="chain" id="PRO_0000188176" description="ATP synthase epsilon chain">
    <location>
        <begin position="1"/>
        <end position="136"/>
    </location>
</feature>
<feature type="region of interest" description="Disordered" evidence="2">
    <location>
        <begin position="112"/>
        <end position="136"/>
    </location>
</feature>
<feature type="compositionally biased region" description="Basic and acidic residues" evidence="2">
    <location>
        <begin position="116"/>
        <end position="125"/>
    </location>
</feature>
<organism>
    <name type="scientific">Prochlorococcus marinus (strain SARG / CCMP1375 / SS120)</name>
    <dbReference type="NCBI Taxonomy" id="167539"/>
    <lineage>
        <taxon>Bacteria</taxon>
        <taxon>Bacillati</taxon>
        <taxon>Cyanobacteriota</taxon>
        <taxon>Cyanophyceae</taxon>
        <taxon>Synechococcales</taxon>
        <taxon>Prochlorococcaceae</taxon>
        <taxon>Prochlorococcus</taxon>
    </lineage>
</organism>
<sequence length="136" mass="14367">MSLTLRVLAPDKSVFDDTVEEVILPSTTGLLGILPGHISMVTAIDIGVLKLRSSNGNWDSIALMGGFAEVESDDVTVLVNAAELGKSIDKATAEKEFEQAKAALNKLEDQAGNSADKLKAKESLNKARARSQAVGE</sequence>
<reference key="1">
    <citation type="journal article" date="2003" name="Proc. Natl. Acad. Sci. U.S.A.">
        <title>Genome sequence of the cyanobacterium Prochlorococcus marinus SS120, a nearly minimal oxyphototrophic genome.</title>
        <authorList>
            <person name="Dufresne A."/>
            <person name="Salanoubat M."/>
            <person name="Partensky F."/>
            <person name="Artiguenave F."/>
            <person name="Axmann I.M."/>
            <person name="Barbe V."/>
            <person name="Duprat S."/>
            <person name="Galperin M.Y."/>
            <person name="Koonin E.V."/>
            <person name="Le Gall F."/>
            <person name="Makarova K.S."/>
            <person name="Ostrowski M."/>
            <person name="Oztas S."/>
            <person name="Robert C."/>
            <person name="Rogozin I.B."/>
            <person name="Scanlan D.J."/>
            <person name="Tandeau de Marsac N."/>
            <person name="Weissenbach J."/>
            <person name="Wincker P."/>
            <person name="Wolf Y.I."/>
            <person name="Hess W.R."/>
        </authorList>
    </citation>
    <scope>NUCLEOTIDE SEQUENCE [LARGE SCALE GENOMIC DNA]</scope>
    <source>
        <strain>SARG / CCMP1375 / SS120</strain>
    </source>
</reference>
<dbReference type="EMBL" id="AE017126">
    <property type="protein sequence ID" value="AAQ00636.1"/>
    <property type="molecule type" value="Genomic_DNA"/>
</dbReference>
<dbReference type="RefSeq" id="NP_875983.1">
    <property type="nucleotide sequence ID" value="NC_005042.1"/>
</dbReference>
<dbReference type="RefSeq" id="WP_011125742.1">
    <property type="nucleotide sequence ID" value="NC_005042.1"/>
</dbReference>
<dbReference type="SMR" id="Q7VA75"/>
<dbReference type="STRING" id="167539.Pro_1592"/>
<dbReference type="EnsemblBacteria" id="AAQ00636">
    <property type="protein sequence ID" value="AAQ00636"/>
    <property type="gene ID" value="Pro_1592"/>
</dbReference>
<dbReference type="KEGG" id="pma:Pro_1592"/>
<dbReference type="PATRIC" id="fig|167539.5.peg.1683"/>
<dbReference type="eggNOG" id="COG0355">
    <property type="taxonomic scope" value="Bacteria"/>
</dbReference>
<dbReference type="HOGENOM" id="CLU_084338_1_2_3"/>
<dbReference type="OrthoDB" id="9804110at2"/>
<dbReference type="Proteomes" id="UP000001420">
    <property type="component" value="Chromosome"/>
</dbReference>
<dbReference type="GO" id="GO:0031676">
    <property type="term" value="C:plasma membrane-derived thylakoid membrane"/>
    <property type="evidence" value="ECO:0007669"/>
    <property type="project" value="UniProtKB-SubCell"/>
</dbReference>
<dbReference type="GO" id="GO:0045259">
    <property type="term" value="C:proton-transporting ATP synthase complex"/>
    <property type="evidence" value="ECO:0007669"/>
    <property type="project" value="UniProtKB-KW"/>
</dbReference>
<dbReference type="GO" id="GO:0005524">
    <property type="term" value="F:ATP binding"/>
    <property type="evidence" value="ECO:0007669"/>
    <property type="project" value="UniProtKB-UniRule"/>
</dbReference>
<dbReference type="GO" id="GO:0046933">
    <property type="term" value="F:proton-transporting ATP synthase activity, rotational mechanism"/>
    <property type="evidence" value="ECO:0007669"/>
    <property type="project" value="UniProtKB-UniRule"/>
</dbReference>
<dbReference type="CDD" id="cd12152">
    <property type="entry name" value="F1-ATPase_delta"/>
    <property type="match status" value="1"/>
</dbReference>
<dbReference type="Gene3D" id="2.60.15.10">
    <property type="entry name" value="F0F1 ATP synthase delta/epsilon subunit, N-terminal"/>
    <property type="match status" value="1"/>
</dbReference>
<dbReference type="Gene3D" id="1.10.287.540">
    <property type="entry name" value="Helix hairpin bin"/>
    <property type="match status" value="1"/>
</dbReference>
<dbReference type="HAMAP" id="MF_00530">
    <property type="entry name" value="ATP_synth_epsil_bac"/>
    <property type="match status" value="1"/>
</dbReference>
<dbReference type="InterPro" id="IPR001469">
    <property type="entry name" value="ATP_synth_F1_dsu/esu"/>
</dbReference>
<dbReference type="InterPro" id="IPR020546">
    <property type="entry name" value="ATP_synth_F1_dsu/esu_N"/>
</dbReference>
<dbReference type="InterPro" id="IPR020547">
    <property type="entry name" value="ATP_synth_F1_esu_C"/>
</dbReference>
<dbReference type="InterPro" id="IPR036771">
    <property type="entry name" value="ATPsynth_dsu/esu_N"/>
</dbReference>
<dbReference type="NCBIfam" id="TIGR01216">
    <property type="entry name" value="ATP_synt_epsi"/>
    <property type="match status" value="1"/>
</dbReference>
<dbReference type="PANTHER" id="PTHR13822">
    <property type="entry name" value="ATP SYNTHASE DELTA/EPSILON CHAIN"/>
    <property type="match status" value="1"/>
</dbReference>
<dbReference type="PANTHER" id="PTHR13822:SF10">
    <property type="entry name" value="ATP SYNTHASE EPSILON CHAIN, CHLOROPLASTIC"/>
    <property type="match status" value="1"/>
</dbReference>
<dbReference type="Pfam" id="PF00401">
    <property type="entry name" value="ATP-synt_DE"/>
    <property type="match status" value="1"/>
</dbReference>
<dbReference type="Pfam" id="PF02823">
    <property type="entry name" value="ATP-synt_DE_N"/>
    <property type="match status" value="1"/>
</dbReference>
<dbReference type="SUPFAM" id="SSF51344">
    <property type="entry name" value="Epsilon subunit of F1F0-ATP synthase N-terminal domain"/>
    <property type="match status" value="1"/>
</dbReference>